<proteinExistence type="inferred from homology"/>
<dbReference type="EC" id="3.6.4.13"/>
<dbReference type="EMBL" id="AAFI02000082">
    <property type="protein sequence ID" value="EAL64503.1"/>
    <property type="molecule type" value="Genomic_DNA"/>
</dbReference>
<dbReference type="RefSeq" id="XP_638017.1">
    <property type="nucleotide sequence ID" value="XM_632925.1"/>
</dbReference>
<dbReference type="SMR" id="Q54MH3"/>
<dbReference type="FunCoup" id="Q54MH3">
    <property type="interactions" value="621"/>
</dbReference>
<dbReference type="STRING" id="44689.Q54MH3"/>
<dbReference type="PaxDb" id="44689-DDB0233398"/>
<dbReference type="EnsemblProtists" id="EAL64503">
    <property type="protein sequence ID" value="EAL64503"/>
    <property type="gene ID" value="DDB_G0285937"/>
</dbReference>
<dbReference type="GeneID" id="8625368"/>
<dbReference type="KEGG" id="ddi:DDB_G0285937"/>
<dbReference type="dictyBase" id="DDB_G0285937">
    <property type="gene designation" value="dhx16"/>
</dbReference>
<dbReference type="VEuPathDB" id="AmoebaDB:DDB_G0285937"/>
<dbReference type="eggNOG" id="KOG0923">
    <property type="taxonomic scope" value="Eukaryota"/>
</dbReference>
<dbReference type="HOGENOM" id="CLU_001832_7_1_1"/>
<dbReference type="InParanoid" id="Q54MH3"/>
<dbReference type="OMA" id="PQWCRES"/>
<dbReference type="PhylomeDB" id="Q54MH3"/>
<dbReference type="PRO" id="PR:Q54MH3"/>
<dbReference type="Proteomes" id="UP000002195">
    <property type="component" value="Chromosome 4"/>
</dbReference>
<dbReference type="GO" id="GO:0005654">
    <property type="term" value="C:nucleoplasm"/>
    <property type="evidence" value="ECO:0007669"/>
    <property type="project" value="UniProtKB-SubCell"/>
</dbReference>
<dbReference type="GO" id="GO:0005634">
    <property type="term" value="C:nucleus"/>
    <property type="evidence" value="ECO:0000250"/>
    <property type="project" value="dictyBase"/>
</dbReference>
<dbReference type="GO" id="GO:0005681">
    <property type="term" value="C:spliceosomal complex"/>
    <property type="evidence" value="ECO:0007669"/>
    <property type="project" value="UniProtKB-KW"/>
</dbReference>
<dbReference type="GO" id="GO:0005524">
    <property type="term" value="F:ATP binding"/>
    <property type="evidence" value="ECO:0007669"/>
    <property type="project" value="UniProtKB-KW"/>
</dbReference>
<dbReference type="GO" id="GO:0016887">
    <property type="term" value="F:ATP hydrolysis activity"/>
    <property type="evidence" value="ECO:0007669"/>
    <property type="project" value="RHEA"/>
</dbReference>
<dbReference type="GO" id="GO:0004386">
    <property type="term" value="F:helicase activity"/>
    <property type="evidence" value="ECO:0000318"/>
    <property type="project" value="GO_Central"/>
</dbReference>
<dbReference type="GO" id="GO:0003723">
    <property type="term" value="F:RNA binding"/>
    <property type="evidence" value="ECO:0000318"/>
    <property type="project" value="GO_Central"/>
</dbReference>
<dbReference type="GO" id="GO:0003724">
    <property type="term" value="F:RNA helicase activity"/>
    <property type="evidence" value="ECO:0007669"/>
    <property type="project" value="UniProtKB-EC"/>
</dbReference>
<dbReference type="GO" id="GO:0006397">
    <property type="term" value="P:mRNA processing"/>
    <property type="evidence" value="ECO:0007669"/>
    <property type="project" value="UniProtKB-KW"/>
</dbReference>
<dbReference type="GO" id="GO:0008380">
    <property type="term" value="P:RNA splicing"/>
    <property type="evidence" value="ECO:0007669"/>
    <property type="project" value="UniProtKB-KW"/>
</dbReference>
<dbReference type="CDD" id="cd17974">
    <property type="entry name" value="DEXHc_DHX16"/>
    <property type="match status" value="1"/>
</dbReference>
<dbReference type="CDD" id="cd18791">
    <property type="entry name" value="SF2_C_RHA"/>
    <property type="match status" value="1"/>
</dbReference>
<dbReference type="FunFam" id="1.20.120.1080:FF:000001">
    <property type="entry name" value="Pre-mRNA-splicing factor ATP-dependent RNA helicase"/>
    <property type="match status" value="1"/>
</dbReference>
<dbReference type="FunFam" id="3.40.50.300:FF:000007">
    <property type="entry name" value="Pre-mRNA-splicing factor ATP-dependent RNA helicase"/>
    <property type="match status" value="1"/>
</dbReference>
<dbReference type="FunFam" id="3.40.50.300:FF:000594">
    <property type="entry name" value="Pre-mRNA-splicing factor ATP-dependent RNA helicase"/>
    <property type="match status" value="1"/>
</dbReference>
<dbReference type="Gene3D" id="1.20.120.1080">
    <property type="match status" value="1"/>
</dbReference>
<dbReference type="Gene3D" id="3.40.50.300">
    <property type="entry name" value="P-loop containing nucleotide triphosphate hydrolases"/>
    <property type="match status" value="2"/>
</dbReference>
<dbReference type="InterPro" id="IPR011709">
    <property type="entry name" value="DEAD-box_helicase_OB_fold"/>
</dbReference>
<dbReference type="InterPro" id="IPR011545">
    <property type="entry name" value="DEAD/DEAH_box_helicase_dom"/>
</dbReference>
<dbReference type="InterPro" id="IPR002464">
    <property type="entry name" value="DNA/RNA_helicase_DEAH_CS"/>
</dbReference>
<dbReference type="InterPro" id="IPR048333">
    <property type="entry name" value="HA2_WH"/>
</dbReference>
<dbReference type="InterPro" id="IPR007502">
    <property type="entry name" value="Helicase-assoc_dom"/>
</dbReference>
<dbReference type="InterPro" id="IPR014001">
    <property type="entry name" value="Helicase_ATP-bd"/>
</dbReference>
<dbReference type="InterPro" id="IPR001650">
    <property type="entry name" value="Helicase_C-like"/>
</dbReference>
<dbReference type="InterPro" id="IPR027417">
    <property type="entry name" value="P-loop_NTPase"/>
</dbReference>
<dbReference type="PANTHER" id="PTHR18934">
    <property type="entry name" value="ATP-DEPENDENT RNA HELICASE"/>
    <property type="match status" value="1"/>
</dbReference>
<dbReference type="PANTHER" id="PTHR18934:SF83">
    <property type="entry name" value="PRE-MRNA-SPLICING FACTOR ATP-DEPENDENT RNA HELICASE DHX16"/>
    <property type="match status" value="1"/>
</dbReference>
<dbReference type="Pfam" id="PF00270">
    <property type="entry name" value="DEAD"/>
    <property type="match status" value="1"/>
</dbReference>
<dbReference type="Pfam" id="PF21010">
    <property type="entry name" value="HA2_C"/>
    <property type="match status" value="1"/>
</dbReference>
<dbReference type="Pfam" id="PF04408">
    <property type="entry name" value="HA2_N"/>
    <property type="match status" value="1"/>
</dbReference>
<dbReference type="Pfam" id="PF00271">
    <property type="entry name" value="Helicase_C"/>
    <property type="match status" value="1"/>
</dbReference>
<dbReference type="Pfam" id="PF07717">
    <property type="entry name" value="OB_NTP_bind"/>
    <property type="match status" value="1"/>
</dbReference>
<dbReference type="SMART" id="SM00487">
    <property type="entry name" value="DEXDc"/>
    <property type="match status" value="1"/>
</dbReference>
<dbReference type="SMART" id="SM00847">
    <property type="entry name" value="HA2"/>
    <property type="match status" value="1"/>
</dbReference>
<dbReference type="SMART" id="SM00490">
    <property type="entry name" value="HELICc"/>
    <property type="match status" value="1"/>
</dbReference>
<dbReference type="SUPFAM" id="SSF52540">
    <property type="entry name" value="P-loop containing nucleoside triphosphate hydrolases"/>
    <property type="match status" value="1"/>
</dbReference>
<dbReference type="PROSITE" id="PS00690">
    <property type="entry name" value="DEAH_ATP_HELICASE"/>
    <property type="match status" value="1"/>
</dbReference>
<dbReference type="PROSITE" id="PS51192">
    <property type="entry name" value="HELICASE_ATP_BIND_1"/>
    <property type="match status" value="1"/>
</dbReference>
<dbReference type="PROSITE" id="PS51194">
    <property type="entry name" value="HELICASE_CTER"/>
    <property type="match status" value="1"/>
</dbReference>
<accession>Q54MH3</accession>
<comment type="function">
    <text evidence="1">Required for pre-mRNA splicing as component of the spliceosome. Contributes to pre-mRNA splicing after spliceosome formation and prior to the first transesterification reaction.</text>
</comment>
<comment type="catalytic activity">
    <reaction>
        <text>ATP + H2O = ADP + phosphate + H(+)</text>
        <dbReference type="Rhea" id="RHEA:13065"/>
        <dbReference type="ChEBI" id="CHEBI:15377"/>
        <dbReference type="ChEBI" id="CHEBI:15378"/>
        <dbReference type="ChEBI" id="CHEBI:30616"/>
        <dbReference type="ChEBI" id="CHEBI:43474"/>
        <dbReference type="ChEBI" id="CHEBI:456216"/>
        <dbReference type="EC" id="3.6.4.13"/>
    </reaction>
</comment>
<comment type="subunit">
    <text evidence="1">Component of pre-catalytic spliceosome complexes.</text>
</comment>
<comment type="subcellular location">
    <subcellularLocation>
        <location evidence="1">Nucleus</location>
    </subcellularLocation>
    <subcellularLocation>
        <location evidence="1">Nucleus</location>
        <location evidence="1">Nucleoplasm</location>
    </subcellularLocation>
</comment>
<comment type="similarity">
    <text evidence="5">Belongs to the DEAD box helicase family. DEAH subfamily. DDX16/PRP8 sub-subfamily.</text>
</comment>
<organism>
    <name type="scientific">Dictyostelium discoideum</name>
    <name type="common">Social amoeba</name>
    <dbReference type="NCBI Taxonomy" id="44689"/>
    <lineage>
        <taxon>Eukaryota</taxon>
        <taxon>Amoebozoa</taxon>
        <taxon>Evosea</taxon>
        <taxon>Eumycetozoa</taxon>
        <taxon>Dictyostelia</taxon>
        <taxon>Dictyosteliales</taxon>
        <taxon>Dictyosteliaceae</taxon>
        <taxon>Dictyostelium</taxon>
    </lineage>
</organism>
<protein>
    <recommendedName>
        <fullName>Putative pre-mRNA-splicing factor ATP-dependent RNA helicase DHX16</fullName>
        <ecNumber>3.6.4.13</ecNumber>
    </recommendedName>
    <alternativeName>
        <fullName>DEAH-box protein 16</fullName>
    </alternativeName>
</protein>
<name>DHX16_DICDI</name>
<gene>
    <name type="primary">dhx16</name>
    <name type="ORF">DDB_G0285937</name>
</gene>
<sequence length="1106" mass="126564">MSSNNESIKNWVSDKIFDILGYRESTMVDYIIALSKKAKDVNSFISTLTEQDFPINSNTKSFAQELLNKSQQKIQNITSSSSSSSSTSLSSSSSSKDKEKEKIEFLKKNKSYKLVIDHDDDIVNSSGSSDSDSDSERKRKKKEKKKEKKDKKDKKDKKSSTRKKSDNNWDDEIEPEPIKPNEKEDENNNNENNDNNNDNNNLQKRQPYKSIIEEENNNDNNNNNGEEDEYEREQREVKELSDRIKKRDEKSTKKKIVDDSETKESIERKNRLEQNEQLETERTKSRRKYLVGEEQKRLILLKREIEEEYELFKDQKLTEQEIKDFEKKKKLYELASQRINESQQSDDYYQLPSEIKDKDSLLKSSYINDNKNKKGNDSSSSSSYNPEQKEWEQNRMKSAISENRGLSTANIGGGNEEYEYVFEDQIEFIKEEVLKQGQKGDGVMILKPGDDGSAQAKMTIQEVRKSLPVYPYREQLIDAVREYQVLIIVGETGSGKTTQIPQYLHEAGFSKTGKIGCTQPRRVAAMSVAARVAEEVGCKLGNEVGYSIRFEDCTSQKTVLQYMTDGMLVREFLTAPDLASYSVLIIDEAHERTLHTDILFGLLKDITRFRPDLKLLISSATMDAERFSDYFDGAPTFNIPGRKYEVTTHYTQAPEADYLDAAVVTVLQIHITEPLGDILVFLTGQEEVDQAAEMLQTRTRGLGTKIKELIITRIYSTLPTDLQAKIFEPTPPNARKVVLATNIAETSLTIDGIIYVIDPGFCKQKMFNPRTGMESLVITPVSRASANQRKGRAGRVAPGKCFRLFTAWAFDNELEENTIPEIQRTNLGNVVLLLKSMGINDLMNFDFMDPPPAQTLIAALEQLYALGALNDRGQLTKLGRKMAEFPVDPQLSKMIIASEKYKCSEEILTICAMLSVGNTIFYRPKDKAFAADAARKLFFHPQGDHLTLMNVFNQWRESGYAVQWCFENFIQHRSMKRAQDVRDQLELLLERVEIPLVSNVDDTDSIRKCIASGFFYNSAKLEKSGLFRTTKHNQSVQIHPSSCLFQSPPKWVVYHELVLTTKEFMRQIVEIQSSWLHEIAPHIYKEKDVNDNQKLPKNIGKKQINK</sequence>
<reference key="1">
    <citation type="journal article" date="2005" name="Nature">
        <title>The genome of the social amoeba Dictyostelium discoideum.</title>
        <authorList>
            <person name="Eichinger L."/>
            <person name="Pachebat J.A."/>
            <person name="Gloeckner G."/>
            <person name="Rajandream M.A."/>
            <person name="Sucgang R."/>
            <person name="Berriman M."/>
            <person name="Song J."/>
            <person name="Olsen R."/>
            <person name="Szafranski K."/>
            <person name="Xu Q."/>
            <person name="Tunggal B."/>
            <person name="Kummerfeld S."/>
            <person name="Madera M."/>
            <person name="Konfortov B.A."/>
            <person name="Rivero F."/>
            <person name="Bankier A.T."/>
            <person name="Lehmann R."/>
            <person name="Hamlin N."/>
            <person name="Davies R."/>
            <person name="Gaudet P."/>
            <person name="Fey P."/>
            <person name="Pilcher K."/>
            <person name="Chen G."/>
            <person name="Saunders D."/>
            <person name="Sodergren E.J."/>
            <person name="Davis P."/>
            <person name="Kerhornou A."/>
            <person name="Nie X."/>
            <person name="Hall N."/>
            <person name="Anjard C."/>
            <person name="Hemphill L."/>
            <person name="Bason N."/>
            <person name="Farbrother P."/>
            <person name="Desany B."/>
            <person name="Just E."/>
            <person name="Morio T."/>
            <person name="Rost R."/>
            <person name="Churcher C.M."/>
            <person name="Cooper J."/>
            <person name="Haydock S."/>
            <person name="van Driessche N."/>
            <person name="Cronin A."/>
            <person name="Goodhead I."/>
            <person name="Muzny D.M."/>
            <person name="Mourier T."/>
            <person name="Pain A."/>
            <person name="Lu M."/>
            <person name="Harper D."/>
            <person name="Lindsay R."/>
            <person name="Hauser H."/>
            <person name="James K.D."/>
            <person name="Quiles M."/>
            <person name="Madan Babu M."/>
            <person name="Saito T."/>
            <person name="Buchrieser C."/>
            <person name="Wardroper A."/>
            <person name="Felder M."/>
            <person name="Thangavelu M."/>
            <person name="Johnson D."/>
            <person name="Knights A."/>
            <person name="Loulseged H."/>
            <person name="Mungall K.L."/>
            <person name="Oliver K."/>
            <person name="Price C."/>
            <person name="Quail M.A."/>
            <person name="Urushihara H."/>
            <person name="Hernandez J."/>
            <person name="Rabbinowitsch E."/>
            <person name="Steffen D."/>
            <person name="Sanders M."/>
            <person name="Ma J."/>
            <person name="Kohara Y."/>
            <person name="Sharp S."/>
            <person name="Simmonds M.N."/>
            <person name="Spiegler S."/>
            <person name="Tivey A."/>
            <person name="Sugano S."/>
            <person name="White B."/>
            <person name="Walker D."/>
            <person name="Woodward J.R."/>
            <person name="Winckler T."/>
            <person name="Tanaka Y."/>
            <person name="Shaulsky G."/>
            <person name="Schleicher M."/>
            <person name="Weinstock G.M."/>
            <person name="Rosenthal A."/>
            <person name="Cox E.C."/>
            <person name="Chisholm R.L."/>
            <person name="Gibbs R.A."/>
            <person name="Loomis W.F."/>
            <person name="Platzer M."/>
            <person name="Kay R.R."/>
            <person name="Williams J.G."/>
            <person name="Dear P.H."/>
            <person name="Noegel A.A."/>
            <person name="Barrell B.G."/>
            <person name="Kuspa A."/>
        </authorList>
    </citation>
    <scope>NUCLEOTIDE SEQUENCE [LARGE SCALE GENOMIC DNA]</scope>
    <source>
        <strain>AX4</strain>
    </source>
</reference>
<feature type="chain" id="PRO_0000330890" description="Putative pre-mRNA-splicing factor ATP-dependent RNA helicase DHX16">
    <location>
        <begin position="1"/>
        <end position="1106"/>
    </location>
</feature>
<feature type="domain" description="Helicase ATP-binding" evidence="2">
    <location>
        <begin position="477"/>
        <end position="640"/>
    </location>
</feature>
<feature type="domain" description="Helicase C-terminal" evidence="3">
    <location>
        <begin position="665"/>
        <end position="838"/>
    </location>
</feature>
<feature type="region of interest" description="Disordered" evidence="4">
    <location>
        <begin position="73"/>
        <end position="100"/>
    </location>
</feature>
<feature type="region of interest" description="Disordered" evidence="4">
    <location>
        <begin position="120"/>
        <end position="286"/>
    </location>
</feature>
<feature type="region of interest" description="Disordered" evidence="4">
    <location>
        <begin position="366"/>
        <end position="394"/>
    </location>
</feature>
<feature type="short sequence motif" description="DEAH box">
    <location>
        <begin position="587"/>
        <end position="590"/>
    </location>
</feature>
<feature type="compositionally biased region" description="Low complexity" evidence="4">
    <location>
        <begin position="78"/>
        <end position="94"/>
    </location>
</feature>
<feature type="compositionally biased region" description="Basic residues" evidence="4">
    <location>
        <begin position="138"/>
        <end position="155"/>
    </location>
</feature>
<feature type="compositionally biased region" description="Basic and acidic residues" evidence="4">
    <location>
        <begin position="156"/>
        <end position="167"/>
    </location>
</feature>
<feature type="compositionally biased region" description="Low complexity" evidence="4">
    <location>
        <begin position="189"/>
        <end position="201"/>
    </location>
</feature>
<feature type="compositionally biased region" description="Basic and acidic residues" evidence="4">
    <location>
        <begin position="232"/>
        <end position="283"/>
    </location>
</feature>
<feature type="binding site" evidence="2">
    <location>
        <begin position="490"/>
        <end position="497"/>
    </location>
    <ligand>
        <name>ATP</name>
        <dbReference type="ChEBI" id="CHEBI:30616"/>
    </ligand>
</feature>
<keyword id="KW-0067">ATP-binding</keyword>
<keyword id="KW-0347">Helicase</keyword>
<keyword id="KW-0378">Hydrolase</keyword>
<keyword id="KW-0507">mRNA processing</keyword>
<keyword id="KW-0508">mRNA splicing</keyword>
<keyword id="KW-0547">Nucleotide-binding</keyword>
<keyword id="KW-0539">Nucleus</keyword>
<keyword id="KW-1185">Reference proteome</keyword>
<keyword id="KW-0747">Spliceosome</keyword>
<evidence type="ECO:0000250" key="1">
    <source>
        <dbReference type="UniProtKB" id="O60231"/>
    </source>
</evidence>
<evidence type="ECO:0000255" key="2">
    <source>
        <dbReference type="PROSITE-ProRule" id="PRU00541"/>
    </source>
</evidence>
<evidence type="ECO:0000255" key="3">
    <source>
        <dbReference type="PROSITE-ProRule" id="PRU00542"/>
    </source>
</evidence>
<evidence type="ECO:0000256" key="4">
    <source>
        <dbReference type="SAM" id="MobiDB-lite"/>
    </source>
</evidence>
<evidence type="ECO:0000305" key="5"/>